<dbReference type="EC" id="4.2.1.36"/>
<dbReference type="EMBL" id="CH408035">
    <property type="protein sequence ID" value="EAQ84224.1"/>
    <property type="molecule type" value="Genomic_DNA"/>
</dbReference>
<dbReference type="RefSeq" id="XP_001228555.1">
    <property type="nucleotide sequence ID" value="XM_001228554.1"/>
</dbReference>
<dbReference type="SMR" id="Q2GN26"/>
<dbReference type="FunCoup" id="Q2GN26">
    <property type="interactions" value="116"/>
</dbReference>
<dbReference type="STRING" id="306901.Q2GN26"/>
<dbReference type="GeneID" id="4396424"/>
<dbReference type="VEuPathDB" id="FungiDB:CHGG_10628"/>
<dbReference type="eggNOG" id="KOG0453">
    <property type="taxonomic scope" value="Eukaryota"/>
</dbReference>
<dbReference type="HOGENOM" id="CLU_006714_3_1_1"/>
<dbReference type="InParanoid" id="Q2GN26"/>
<dbReference type="OMA" id="EQMGEYC"/>
<dbReference type="OrthoDB" id="10262323at2759"/>
<dbReference type="UniPathway" id="UPA00033">
    <property type="reaction ID" value="UER01027"/>
</dbReference>
<dbReference type="Proteomes" id="UP000001056">
    <property type="component" value="Unassembled WGS sequence"/>
</dbReference>
<dbReference type="GO" id="GO:0005739">
    <property type="term" value="C:mitochondrion"/>
    <property type="evidence" value="ECO:0007669"/>
    <property type="project" value="UniProtKB-SubCell"/>
</dbReference>
<dbReference type="GO" id="GO:0051539">
    <property type="term" value="F:4 iron, 4 sulfur cluster binding"/>
    <property type="evidence" value="ECO:0007669"/>
    <property type="project" value="InterPro"/>
</dbReference>
<dbReference type="GO" id="GO:0004409">
    <property type="term" value="F:homoaconitate hydratase activity"/>
    <property type="evidence" value="ECO:0007669"/>
    <property type="project" value="UniProtKB-EC"/>
</dbReference>
<dbReference type="GO" id="GO:0046872">
    <property type="term" value="F:metal ion binding"/>
    <property type="evidence" value="ECO:0007669"/>
    <property type="project" value="UniProtKB-KW"/>
</dbReference>
<dbReference type="GO" id="GO:0019878">
    <property type="term" value="P:lysine biosynthetic process via aminoadipic acid"/>
    <property type="evidence" value="ECO:0007669"/>
    <property type="project" value="UniProtKB-UniPathway"/>
</dbReference>
<dbReference type="CDD" id="cd01674">
    <property type="entry name" value="Homoaconitase_Swivel"/>
    <property type="match status" value="1"/>
</dbReference>
<dbReference type="FunFam" id="3.30.499.10:FF:000013">
    <property type="entry name" value="Homoaconitase, mitochondrial"/>
    <property type="match status" value="1"/>
</dbReference>
<dbReference type="Gene3D" id="3.30.499.10">
    <property type="entry name" value="Aconitase, domain 3"/>
    <property type="match status" value="2"/>
</dbReference>
<dbReference type="Gene3D" id="3.20.19.10">
    <property type="entry name" value="Aconitase, domain 4"/>
    <property type="match status" value="1"/>
</dbReference>
<dbReference type="InterPro" id="IPR015931">
    <property type="entry name" value="Acnase/IPM_dHydase_lsu_aba_1/3"/>
</dbReference>
<dbReference type="InterPro" id="IPR001030">
    <property type="entry name" value="Acoase/IPM_deHydtase_lsu_aba"/>
</dbReference>
<dbReference type="InterPro" id="IPR015928">
    <property type="entry name" value="Aconitase/3IPM_dehydase_swvl"/>
</dbReference>
<dbReference type="InterPro" id="IPR018136">
    <property type="entry name" value="Aconitase_4Fe-4S_BS"/>
</dbReference>
<dbReference type="InterPro" id="IPR036008">
    <property type="entry name" value="Aconitase_4Fe-4S_dom"/>
</dbReference>
<dbReference type="InterPro" id="IPR000573">
    <property type="entry name" value="AconitaseA/IPMdHydase_ssu_swvl"/>
</dbReference>
<dbReference type="InterPro" id="IPR004418">
    <property type="entry name" value="Homoaconitase_mito"/>
</dbReference>
<dbReference type="InterPro" id="IPR039386">
    <property type="entry name" value="Homoaconitase_swivel"/>
</dbReference>
<dbReference type="InterPro" id="IPR050067">
    <property type="entry name" value="IPM_dehydratase_rel_enz"/>
</dbReference>
<dbReference type="NCBIfam" id="TIGR00139">
    <property type="entry name" value="h_aconitase"/>
    <property type="match status" value="1"/>
</dbReference>
<dbReference type="PANTHER" id="PTHR43822:SF2">
    <property type="entry name" value="HOMOACONITASE, MITOCHONDRIAL"/>
    <property type="match status" value="1"/>
</dbReference>
<dbReference type="PANTHER" id="PTHR43822">
    <property type="entry name" value="HOMOACONITASE, MITOCHONDRIAL-RELATED"/>
    <property type="match status" value="1"/>
</dbReference>
<dbReference type="Pfam" id="PF00330">
    <property type="entry name" value="Aconitase"/>
    <property type="match status" value="1"/>
</dbReference>
<dbReference type="Pfam" id="PF00694">
    <property type="entry name" value="Aconitase_C"/>
    <property type="match status" value="1"/>
</dbReference>
<dbReference type="PRINTS" id="PR00415">
    <property type="entry name" value="ACONITASE"/>
</dbReference>
<dbReference type="SUPFAM" id="SSF53732">
    <property type="entry name" value="Aconitase iron-sulfur domain"/>
    <property type="match status" value="1"/>
</dbReference>
<dbReference type="SUPFAM" id="SSF52016">
    <property type="entry name" value="LeuD/IlvD-like"/>
    <property type="match status" value="1"/>
</dbReference>
<dbReference type="PROSITE" id="PS00450">
    <property type="entry name" value="ACONITASE_1"/>
    <property type="match status" value="1"/>
</dbReference>
<name>LYS4_CHAGB</name>
<sequence length="797" mass="85257">MVARFVPSAMTVLVARRGLAMASTRRGWRGLAVNLKPAAGRQWRQAYSTTPVRQNALHSEIEAQAASPFAAPGTRVQNPQTLTEKIVQRYAIGLPPGKKVKAGDYVTISPAQCMTHDNSWPVVTKFTSIGATKIHNNRQVVVTLDHDVQNTSESNLKKYKNIENFARQHGVDFYPAGRGIGHQIMIEEGYAWPGTLTVASDSHSNMYGGVAALGTPVVRTDAASIWATGQTWWQIPPIAKVTFTGVLPRGVTGKDVIIALCALFNQDEVLNHAIEFTGSDLTLSSLPIDDRLTISNMTTEWGAVAGIFPIDSTLKSWLRAKATVSAMLNPDLGGKARITHDKIEELFRDPPKPDLGATYAKSLYLNLSTLSPFVAGPNSVKVATPVKDLEAQNIKINKAYLVSCTNSRASDIAAAANVFREAANGGPIPKVAPGVEFYISAASLPEQEIAEQAGDWRVLLDAGCIENPASCNACIGLGRGLLQPGDVGISASNRNWNGRMGSPQAKAYLASPEVVAASALKGEIAGPGWYEKPEGVEKVIIGEGTGDLEADRAVSIADALESLVAQAESMISSAEKSLESSPAAATGAVGNAMADATADQAGEEGLIDILPGFPEKVSGEIVFCDSDNINTDGIYPGKYTYQDDITRDTMAQVVMENYDRSFASLAKPGDILVAGFNFGCGSSREQAATAILAKGIPLVVAGSFGNIFSRNSINNALMGVEVPRLVKRLREEFGEKVPTRRTGWRFEWDVRRSKVTVTEGEGGETWSQKVGDLPPNVQEIIAVGGLEKWVKHRISQA</sequence>
<gene>
    <name type="primary">LYS4</name>
    <name type="ORF">CHGG_10628</name>
</gene>
<feature type="transit peptide" description="Mitochondrion" evidence="2">
    <location>
        <begin position="1"/>
        <end position="47"/>
    </location>
</feature>
<feature type="chain" id="PRO_0000247921" description="Homoaconitase, mitochondrial">
    <location>
        <begin position="48"/>
        <end position="797"/>
    </location>
</feature>
<feature type="binding site" evidence="1">
    <location>
        <position position="404"/>
    </location>
    <ligand>
        <name>[4Fe-4S] cluster</name>
        <dbReference type="ChEBI" id="CHEBI:49883"/>
    </ligand>
</feature>
<feature type="binding site" evidence="1">
    <location>
        <position position="471"/>
    </location>
    <ligand>
        <name>[4Fe-4S] cluster</name>
        <dbReference type="ChEBI" id="CHEBI:49883"/>
    </ligand>
</feature>
<feature type="binding site" evidence="1">
    <location>
        <position position="474"/>
    </location>
    <ligand>
        <name>[4Fe-4S] cluster</name>
        <dbReference type="ChEBI" id="CHEBI:49883"/>
    </ligand>
</feature>
<comment type="function">
    <text evidence="1">Catalyzes the reversible hydration of cis-homoaconitate to (2R,3S)-homoisocitrate, a step in the alpha-aminoadipate pathway for lysine biosynthesis.</text>
</comment>
<comment type="catalytic activity">
    <reaction>
        <text>(2R,3S)-homoisocitrate = cis-homoaconitate + H2O</text>
        <dbReference type="Rhea" id="RHEA:15485"/>
        <dbReference type="ChEBI" id="CHEBI:15377"/>
        <dbReference type="ChEBI" id="CHEBI:15404"/>
        <dbReference type="ChEBI" id="CHEBI:58174"/>
        <dbReference type="EC" id="4.2.1.36"/>
    </reaction>
</comment>
<comment type="cofactor">
    <cofactor evidence="1">
        <name>[4Fe-4S] cluster</name>
        <dbReference type="ChEBI" id="CHEBI:49883"/>
    </cofactor>
    <text evidence="1">Binds 1 [4Fe-4S] cluster per subunit.</text>
</comment>
<comment type="pathway">
    <text>Amino-acid biosynthesis; L-lysine biosynthesis via AAA pathway; L-alpha-aminoadipate from 2-oxoglutarate: step 3/5.</text>
</comment>
<comment type="subcellular location">
    <subcellularLocation>
        <location evidence="1">Mitochondrion</location>
    </subcellularLocation>
</comment>
<comment type="similarity">
    <text evidence="3">Belongs to the aconitase/IPM isomerase family.</text>
</comment>
<organism>
    <name type="scientific">Chaetomium globosum (strain ATCC 6205 / CBS 148.51 / DSM 1962 / NBRC 6347 / NRRL 1970)</name>
    <name type="common">Soil fungus</name>
    <dbReference type="NCBI Taxonomy" id="306901"/>
    <lineage>
        <taxon>Eukaryota</taxon>
        <taxon>Fungi</taxon>
        <taxon>Dikarya</taxon>
        <taxon>Ascomycota</taxon>
        <taxon>Pezizomycotina</taxon>
        <taxon>Sordariomycetes</taxon>
        <taxon>Sordariomycetidae</taxon>
        <taxon>Sordariales</taxon>
        <taxon>Chaetomiaceae</taxon>
        <taxon>Chaetomium</taxon>
    </lineage>
</organism>
<protein>
    <recommendedName>
        <fullName>Homoaconitase, mitochondrial</fullName>
        <ecNumber>4.2.1.36</ecNumber>
    </recommendedName>
    <alternativeName>
        <fullName>Homoaconitate hydratase</fullName>
    </alternativeName>
</protein>
<proteinExistence type="inferred from homology"/>
<reference key="1">
    <citation type="journal article" date="2015" name="Genome Announc.">
        <title>Draft genome sequence of the cellulolytic fungus Chaetomium globosum.</title>
        <authorList>
            <person name="Cuomo C.A."/>
            <person name="Untereiner W.A."/>
            <person name="Ma L.-J."/>
            <person name="Grabherr M."/>
            <person name="Birren B.W."/>
        </authorList>
    </citation>
    <scope>NUCLEOTIDE SEQUENCE [LARGE SCALE GENOMIC DNA]</scope>
    <source>
        <strain>ATCC 6205 / CBS 148.51 / DSM 1962 / NBRC 6347 / NRRL 1970</strain>
    </source>
</reference>
<accession>Q2GN26</accession>
<keyword id="KW-0028">Amino-acid biosynthesis</keyword>
<keyword id="KW-0408">Iron</keyword>
<keyword id="KW-0411">Iron-sulfur</keyword>
<keyword id="KW-0456">Lyase</keyword>
<keyword id="KW-0457">Lysine biosynthesis</keyword>
<keyword id="KW-0479">Metal-binding</keyword>
<keyword id="KW-0496">Mitochondrion</keyword>
<keyword id="KW-1185">Reference proteome</keyword>
<keyword id="KW-0809">Transit peptide</keyword>
<evidence type="ECO:0000250" key="1"/>
<evidence type="ECO:0000255" key="2"/>
<evidence type="ECO:0000305" key="3"/>